<protein>
    <recommendedName>
        <fullName>Uncharacterized lipoprotein SAB0392</fullName>
    </recommendedName>
</protein>
<comment type="subcellular location">
    <subcellularLocation>
        <location evidence="1">Cell membrane</location>
        <topology evidence="1">Lipid-anchor</topology>
    </subcellularLocation>
</comment>
<comment type="similarity">
    <text evidence="2">Belongs to the staphylococcal tandem lipoprotein family.</text>
</comment>
<name>Y392_STAAB</name>
<proteinExistence type="inferred from homology"/>
<evidence type="ECO:0000255" key="1">
    <source>
        <dbReference type="PROSITE-ProRule" id="PRU00303"/>
    </source>
</evidence>
<evidence type="ECO:0000305" key="2"/>
<reference key="1">
    <citation type="journal article" date="2007" name="PLoS ONE">
        <title>Molecular correlates of host specialization in Staphylococcus aureus.</title>
        <authorList>
            <person name="Herron-Olson L."/>
            <person name="Fitzgerald J.R."/>
            <person name="Musser J.M."/>
            <person name="Kapur V."/>
        </authorList>
    </citation>
    <scope>NUCLEOTIDE SEQUENCE [LARGE SCALE GENOMIC DNA]</scope>
    <source>
        <strain>bovine RF122 / ET3-1</strain>
    </source>
</reference>
<organism>
    <name type="scientific">Staphylococcus aureus (strain bovine RF122 / ET3-1)</name>
    <dbReference type="NCBI Taxonomy" id="273036"/>
    <lineage>
        <taxon>Bacteria</taxon>
        <taxon>Bacillati</taxon>
        <taxon>Bacillota</taxon>
        <taxon>Bacilli</taxon>
        <taxon>Bacillales</taxon>
        <taxon>Staphylococcaceae</taxon>
        <taxon>Staphylococcus</taxon>
    </lineage>
</organism>
<feature type="signal peptide" evidence="1">
    <location>
        <begin position="1"/>
        <end position="22"/>
    </location>
</feature>
<feature type="chain" id="PRO_0000282097" description="Uncharacterized lipoprotein SAB0392">
    <location>
        <begin position="23"/>
        <end position="261"/>
    </location>
</feature>
<feature type="lipid moiety-binding region" description="N-palmitoyl cysteine" evidence="1">
    <location>
        <position position="23"/>
    </location>
</feature>
<feature type="lipid moiety-binding region" description="S-diacylglycerol cysteine" evidence="1">
    <location>
        <position position="23"/>
    </location>
</feature>
<sequence length="261" mass="29873">MGYLKKVGMCISLLIVIIFVTSCGGGNKITGDSKETQIKKSFAKTLDMYPIKNLDDLYDKEGYRDGEFKKGDKGTWGISSAMVKQPKGKIMRSRGMYLFLNRNTRTAKGYFIVDVTSNDTLKKTEDKEKRYPVKMVNNKIIPIGPINDEGIKKEIENFKFFSQYGDFKGLKNYQNGDYSYNSEAPTYSAKFQLSNDDYNVKQLRKMYDIQTKKAPKLLLKCTGDLKGSSIGHKDIEFTFVENQEENVFFTDSLEFTPSEDY</sequence>
<dbReference type="EMBL" id="AJ938182">
    <property type="protein sequence ID" value="CAI80080.1"/>
    <property type="molecule type" value="Genomic_DNA"/>
</dbReference>
<dbReference type="RefSeq" id="WP_000540885.1">
    <property type="nucleotide sequence ID" value="NC_007622.1"/>
</dbReference>
<dbReference type="SMR" id="Q2YVQ8"/>
<dbReference type="KEGG" id="sab:SAB0392"/>
<dbReference type="HOGENOM" id="CLU_071589_0_1_9"/>
<dbReference type="GO" id="GO:0005886">
    <property type="term" value="C:plasma membrane"/>
    <property type="evidence" value="ECO:0007669"/>
    <property type="project" value="UniProtKB-SubCell"/>
</dbReference>
<dbReference type="Gene3D" id="2.50.20.40">
    <property type="match status" value="1"/>
</dbReference>
<dbReference type="InterPro" id="IPR007595">
    <property type="entry name" value="Csa"/>
</dbReference>
<dbReference type="InterPro" id="IPR038641">
    <property type="entry name" value="Csa_sf"/>
</dbReference>
<dbReference type="NCBIfam" id="TIGR01742">
    <property type="entry name" value="SA_tandem_lipo"/>
    <property type="match status" value="1"/>
</dbReference>
<dbReference type="Pfam" id="PF04507">
    <property type="entry name" value="DUF576"/>
    <property type="match status" value="1"/>
</dbReference>
<dbReference type="PROSITE" id="PS51257">
    <property type="entry name" value="PROKAR_LIPOPROTEIN"/>
    <property type="match status" value="1"/>
</dbReference>
<keyword id="KW-1003">Cell membrane</keyword>
<keyword id="KW-0449">Lipoprotein</keyword>
<keyword id="KW-0472">Membrane</keyword>
<keyword id="KW-0564">Palmitate</keyword>
<keyword id="KW-0732">Signal</keyword>
<gene>
    <name type="ordered locus">SAB0392</name>
</gene>
<accession>Q2YVQ8</accession>